<accession>Q7A342</accession>
<organism>
    <name type="scientific">Staphylococcus aureus (strain N315)</name>
    <dbReference type="NCBI Taxonomy" id="158879"/>
    <lineage>
        <taxon>Bacteria</taxon>
        <taxon>Bacillati</taxon>
        <taxon>Bacillota</taxon>
        <taxon>Bacilli</taxon>
        <taxon>Bacillales</taxon>
        <taxon>Staphylococcaceae</taxon>
        <taxon>Staphylococcus</taxon>
    </lineage>
</organism>
<dbReference type="EC" id="7.-.-.-"/>
<dbReference type="EMBL" id="BA000018">
    <property type="protein sequence ID" value="BAB43782.1"/>
    <property type="status" value="ALT_INIT"/>
    <property type="molecule type" value="Genomic_DNA"/>
</dbReference>
<dbReference type="PIR" id="D90077">
    <property type="entry name" value="D90077"/>
</dbReference>
<dbReference type="RefSeq" id="WP_000138654.1">
    <property type="nucleotide sequence ID" value="NC_002745.2"/>
</dbReference>
<dbReference type="SMR" id="Q7A342"/>
<dbReference type="EnsemblBacteria" id="BAB43782">
    <property type="protein sequence ID" value="BAB43782"/>
    <property type="gene ID" value="BAB43782"/>
</dbReference>
<dbReference type="KEGG" id="sau:SA2476"/>
<dbReference type="HOGENOM" id="CLU_000604_86_7_9"/>
<dbReference type="GO" id="GO:0043190">
    <property type="term" value="C:ATP-binding cassette (ABC) transporter complex"/>
    <property type="evidence" value="ECO:0007669"/>
    <property type="project" value="TreeGrafter"/>
</dbReference>
<dbReference type="GO" id="GO:0005524">
    <property type="term" value="F:ATP binding"/>
    <property type="evidence" value="ECO:0007669"/>
    <property type="project" value="UniProtKB-KW"/>
</dbReference>
<dbReference type="GO" id="GO:0016887">
    <property type="term" value="F:ATP hydrolysis activity"/>
    <property type="evidence" value="ECO:0007669"/>
    <property type="project" value="InterPro"/>
</dbReference>
<dbReference type="GO" id="GO:0042626">
    <property type="term" value="F:ATPase-coupled transmembrane transporter activity"/>
    <property type="evidence" value="ECO:0007669"/>
    <property type="project" value="TreeGrafter"/>
</dbReference>
<dbReference type="CDD" id="cd03225">
    <property type="entry name" value="ABC_cobalt_CbiO_domain1"/>
    <property type="match status" value="2"/>
</dbReference>
<dbReference type="FunFam" id="3.40.50.300:FF:001422">
    <property type="entry name" value="Cobalt ABC transporter ATP-binding protein"/>
    <property type="match status" value="1"/>
</dbReference>
<dbReference type="FunFam" id="3.40.50.300:FF:000224">
    <property type="entry name" value="Energy-coupling factor transporter ATP-binding protein EcfA"/>
    <property type="match status" value="1"/>
</dbReference>
<dbReference type="Gene3D" id="3.40.50.300">
    <property type="entry name" value="P-loop containing nucleotide triphosphate hydrolases"/>
    <property type="match status" value="2"/>
</dbReference>
<dbReference type="InterPro" id="IPR003593">
    <property type="entry name" value="AAA+_ATPase"/>
</dbReference>
<dbReference type="InterPro" id="IPR022216">
    <property type="entry name" value="ABC_Co_transporter"/>
</dbReference>
<dbReference type="InterPro" id="IPR003439">
    <property type="entry name" value="ABC_transporter-like_ATP-bd"/>
</dbReference>
<dbReference type="InterPro" id="IPR017871">
    <property type="entry name" value="ABC_transporter-like_CS"/>
</dbReference>
<dbReference type="InterPro" id="IPR015856">
    <property type="entry name" value="ABC_transpr_CbiO/EcfA_su"/>
</dbReference>
<dbReference type="InterPro" id="IPR050095">
    <property type="entry name" value="ECF_ABC_transporter_ATP-bd"/>
</dbReference>
<dbReference type="InterPro" id="IPR027417">
    <property type="entry name" value="P-loop_NTPase"/>
</dbReference>
<dbReference type="NCBIfam" id="NF010167">
    <property type="entry name" value="PRK13648.1"/>
    <property type="match status" value="2"/>
</dbReference>
<dbReference type="PANTHER" id="PTHR43553:SF26">
    <property type="entry name" value="ABC TRANSPORTER ATP-BINDING PROTEIN BC_2655-RELATED"/>
    <property type="match status" value="1"/>
</dbReference>
<dbReference type="PANTHER" id="PTHR43553">
    <property type="entry name" value="HEAVY METAL TRANSPORTER"/>
    <property type="match status" value="1"/>
</dbReference>
<dbReference type="Pfam" id="PF00005">
    <property type="entry name" value="ABC_tran"/>
    <property type="match status" value="2"/>
</dbReference>
<dbReference type="Pfam" id="PF12558">
    <property type="entry name" value="DUF3744"/>
    <property type="match status" value="1"/>
</dbReference>
<dbReference type="SMART" id="SM00382">
    <property type="entry name" value="AAA"/>
    <property type="match status" value="2"/>
</dbReference>
<dbReference type="SUPFAM" id="SSF52540">
    <property type="entry name" value="P-loop containing nucleoside triphosphate hydrolases"/>
    <property type="match status" value="2"/>
</dbReference>
<dbReference type="PROSITE" id="PS00211">
    <property type="entry name" value="ABC_TRANSPORTER_1"/>
    <property type="match status" value="2"/>
</dbReference>
<dbReference type="PROSITE" id="PS50893">
    <property type="entry name" value="ABC_TRANSPORTER_2"/>
    <property type="match status" value="2"/>
</dbReference>
<protein>
    <recommendedName>
        <fullName>Putative ABC transporter ATP-binding protein SA2476</fullName>
        <ecNumber>7.-.-.-</ecNumber>
    </recommendedName>
</protein>
<evidence type="ECO:0000250" key="1"/>
<evidence type="ECO:0000255" key="2">
    <source>
        <dbReference type="PROSITE-ProRule" id="PRU00434"/>
    </source>
</evidence>
<evidence type="ECO:0000305" key="3"/>
<reference key="1">
    <citation type="journal article" date="2001" name="Lancet">
        <title>Whole genome sequencing of meticillin-resistant Staphylococcus aureus.</title>
        <authorList>
            <person name="Kuroda M."/>
            <person name="Ohta T."/>
            <person name="Uchiyama I."/>
            <person name="Baba T."/>
            <person name="Yuzawa H."/>
            <person name="Kobayashi I."/>
            <person name="Cui L."/>
            <person name="Oguchi A."/>
            <person name="Aoki K."/>
            <person name="Nagai Y."/>
            <person name="Lian J.-Q."/>
            <person name="Ito T."/>
            <person name="Kanamori M."/>
            <person name="Matsumaru H."/>
            <person name="Maruyama A."/>
            <person name="Murakami H."/>
            <person name="Hosoyama A."/>
            <person name="Mizutani-Ui Y."/>
            <person name="Takahashi N.K."/>
            <person name="Sawano T."/>
            <person name="Inoue R."/>
            <person name="Kaito C."/>
            <person name="Sekimizu K."/>
            <person name="Hirakawa H."/>
            <person name="Kuhara S."/>
            <person name="Goto S."/>
            <person name="Yabuzaki J."/>
            <person name="Kanehisa M."/>
            <person name="Yamashita A."/>
            <person name="Oshima K."/>
            <person name="Furuya K."/>
            <person name="Yoshino C."/>
            <person name="Shiba T."/>
            <person name="Hattori M."/>
            <person name="Ogasawara N."/>
            <person name="Hayashi H."/>
            <person name="Hiramatsu K."/>
        </authorList>
    </citation>
    <scope>NUCLEOTIDE SEQUENCE [LARGE SCALE GENOMIC DNA]</scope>
    <source>
        <strain>N315</strain>
    </source>
</reference>
<name>Y2476_STAAN</name>
<feature type="chain" id="PRO_0000092070" description="Putative ABC transporter ATP-binding protein SA2476">
    <location>
        <begin position="1"/>
        <end position="570"/>
    </location>
</feature>
<feature type="domain" description="ABC transporter 1" evidence="2">
    <location>
        <begin position="6"/>
        <end position="247"/>
    </location>
</feature>
<feature type="domain" description="ABC transporter 2" evidence="2">
    <location>
        <begin position="304"/>
        <end position="537"/>
    </location>
</feature>
<feature type="binding site" evidence="2">
    <location>
        <begin position="40"/>
        <end position="47"/>
    </location>
    <ligand>
        <name>ATP</name>
        <dbReference type="ChEBI" id="CHEBI:30616"/>
        <label>1</label>
    </ligand>
</feature>
<feature type="binding site" evidence="2">
    <location>
        <begin position="338"/>
        <end position="345"/>
    </location>
    <ligand>
        <name>ATP</name>
        <dbReference type="ChEBI" id="CHEBI:30616"/>
        <label>2</label>
    </ligand>
</feature>
<sequence>MTEPIISFKDFSFQYHSQATPTLQNINVDIYPGEKVLVVGASGSGKSTFANCINGLIPFKTKGNITGELYINNQDATVSCLHDRSNVVGTVLQDTDGQFIGLTAAEDMAFLLENNCVEQDDMKKNVSYWAEKVGMIEHLNHRPQDLSGGQKQRVSLGGILIHRTPILILDEPLANLDPATGHETLRLLNNIHEETKSTMIIVEHRLEESLDDTFDRVLLFKDGKIIANTTPSDLLKSSKLKEAGIREPLYCTALKYAEVDVESIDNLANLRDVCMSEHVKFKVKKWIDETSANNDNKYKSEPLLELNEVCVQYSDYSNSVLNNVQLNVYRREMLSIVGHNGAGKSTLAKAICGFLDITGNIQFCNRGFNQLSISERSEFVGYVMQNPNHMISEKMIYDEVALGLRARGMKESDIKIRVENVLKICGLYAFRNWPIAALSYGQKKRVTIASVLVLNPEIIILDEPTAGQDFYHYNEIMSFLIELNRQGKTIIMITHDMHLLSEYSSRTVVLSKGQVVADTTPVLILNDKKICEIASLRQTSLFEMAEYIGISEPQKLVQLFINHDRKVRRQ</sequence>
<comment type="function">
    <text evidence="1">Probably part of an ABC transporter complex. Responsible for energy coupling to the transport system (By similarity).</text>
</comment>
<comment type="subcellular location">
    <subcellularLocation>
        <location evidence="1">Cell membrane</location>
        <topology evidence="1">Peripheral membrane protein</topology>
    </subcellularLocation>
</comment>
<comment type="similarity">
    <text evidence="3">Belongs to the ABC transporter superfamily.</text>
</comment>
<comment type="sequence caution" evidence="3">
    <conflict type="erroneous initiation">
        <sequence resource="EMBL-CDS" id="BAB43782"/>
    </conflict>
</comment>
<keyword id="KW-0067">ATP-binding</keyword>
<keyword id="KW-1003">Cell membrane</keyword>
<keyword id="KW-0472">Membrane</keyword>
<keyword id="KW-0547">Nucleotide-binding</keyword>
<keyword id="KW-0677">Repeat</keyword>
<keyword id="KW-1278">Translocase</keyword>
<keyword id="KW-0813">Transport</keyword>
<proteinExistence type="inferred from homology"/>
<gene>
    <name type="ordered locus">SA2476</name>
</gene>